<comment type="function">
    <text evidence="1">RNA chaperone that binds small regulatory RNA (sRNAs) and mRNAs to facilitate mRNA translational regulation in response to envelope stress, environmental stress and changes in metabolite concentrations. Also binds with high specificity to tRNAs.</text>
</comment>
<comment type="subunit">
    <text evidence="1">Homohexamer.</text>
</comment>
<comment type="similarity">
    <text evidence="1">Belongs to the Hfq family.</text>
</comment>
<dbReference type="EMBL" id="CP000680">
    <property type="protein sequence ID" value="ABP83403.1"/>
    <property type="molecule type" value="Genomic_DNA"/>
</dbReference>
<dbReference type="SMR" id="A4XPY7"/>
<dbReference type="STRING" id="399739.Pmen_0635"/>
<dbReference type="KEGG" id="pmy:Pmen_0635"/>
<dbReference type="PATRIC" id="fig|399739.8.peg.642"/>
<dbReference type="eggNOG" id="COG1923">
    <property type="taxonomic scope" value="Bacteria"/>
</dbReference>
<dbReference type="HOGENOM" id="CLU_113688_2_2_6"/>
<dbReference type="OrthoDB" id="9799751at2"/>
<dbReference type="GO" id="GO:0005829">
    <property type="term" value="C:cytosol"/>
    <property type="evidence" value="ECO:0007669"/>
    <property type="project" value="TreeGrafter"/>
</dbReference>
<dbReference type="GO" id="GO:0003723">
    <property type="term" value="F:RNA binding"/>
    <property type="evidence" value="ECO:0007669"/>
    <property type="project" value="UniProtKB-UniRule"/>
</dbReference>
<dbReference type="GO" id="GO:0006355">
    <property type="term" value="P:regulation of DNA-templated transcription"/>
    <property type="evidence" value="ECO:0007669"/>
    <property type="project" value="InterPro"/>
</dbReference>
<dbReference type="GO" id="GO:0043487">
    <property type="term" value="P:regulation of RNA stability"/>
    <property type="evidence" value="ECO:0007669"/>
    <property type="project" value="TreeGrafter"/>
</dbReference>
<dbReference type="GO" id="GO:0045974">
    <property type="term" value="P:regulation of translation, ncRNA-mediated"/>
    <property type="evidence" value="ECO:0007669"/>
    <property type="project" value="TreeGrafter"/>
</dbReference>
<dbReference type="CDD" id="cd01716">
    <property type="entry name" value="Hfq"/>
    <property type="match status" value="1"/>
</dbReference>
<dbReference type="FunFam" id="2.30.30.100:FF:000001">
    <property type="entry name" value="RNA-binding protein Hfq"/>
    <property type="match status" value="1"/>
</dbReference>
<dbReference type="Gene3D" id="2.30.30.100">
    <property type="match status" value="1"/>
</dbReference>
<dbReference type="HAMAP" id="MF_00436">
    <property type="entry name" value="Hfq"/>
    <property type="match status" value="1"/>
</dbReference>
<dbReference type="InterPro" id="IPR005001">
    <property type="entry name" value="Hfq"/>
</dbReference>
<dbReference type="InterPro" id="IPR010920">
    <property type="entry name" value="LSM_dom_sf"/>
</dbReference>
<dbReference type="InterPro" id="IPR047575">
    <property type="entry name" value="Sm"/>
</dbReference>
<dbReference type="NCBIfam" id="TIGR02383">
    <property type="entry name" value="Hfq"/>
    <property type="match status" value="1"/>
</dbReference>
<dbReference type="NCBIfam" id="NF001602">
    <property type="entry name" value="PRK00395.1"/>
    <property type="match status" value="1"/>
</dbReference>
<dbReference type="PANTHER" id="PTHR34772">
    <property type="entry name" value="RNA-BINDING PROTEIN HFQ"/>
    <property type="match status" value="1"/>
</dbReference>
<dbReference type="PANTHER" id="PTHR34772:SF1">
    <property type="entry name" value="RNA-BINDING PROTEIN HFQ"/>
    <property type="match status" value="1"/>
</dbReference>
<dbReference type="Pfam" id="PF17209">
    <property type="entry name" value="Hfq"/>
    <property type="match status" value="1"/>
</dbReference>
<dbReference type="SUPFAM" id="SSF50182">
    <property type="entry name" value="Sm-like ribonucleoproteins"/>
    <property type="match status" value="1"/>
</dbReference>
<dbReference type="PROSITE" id="PS52002">
    <property type="entry name" value="SM"/>
    <property type="match status" value="1"/>
</dbReference>
<accession>A4XPY7</accession>
<name>HFQ_ECTM1</name>
<keyword id="KW-0694">RNA-binding</keyword>
<keyword id="KW-0346">Stress response</keyword>
<organism>
    <name type="scientific">Ectopseudomonas mendocina (strain ymp)</name>
    <name type="common">Pseudomonas mendocina</name>
    <dbReference type="NCBI Taxonomy" id="399739"/>
    <lineage>
        <taxon>Bacteria</taxon>
        <taxon>Pseudomonadati</taxon>
        <taxon>Pseudomonadota</taxon>
        <taxon>Gammaproteobacteria</taxon>
        <taxon>Pseudomonadales</taxon>
        <taxon>Pseudomonadaceae</taxon>
        <taxon>Ectopseudomonas</taxon>
    </lineage>
</organism>
<proteinExistence type="inferred from homology"/>
<reference key="1">
    <citation type="submission" date="2007-04" db="EMBL/GenBank/DDBJ databases">
        <title>Complete sequence of Pseudomonas mendocina ymp.</title>
        <authorList>
            <consortium name="US DOE Joint Genome Institute"/>
            <person name="Copeland A."/>
            <person name="Lucas S."/>
            <person name="Lapidus A."/>
            <person name="Barry K."/>
            <person name="Glavina del Rio T."/>
            <person name="Dalin E."/>
            <person name="Tice H."/>
            <person name="Pitluck S."/>
            <person name="Kiss H."/>
            <person name="Brettin T."/>
            <person name="Detter J.C."/>
            <person name="Bruce D."/>
            <person name="Han C."/>
            <person name="Schmutz J."/>
            <person name="Larimer F."/>
            <person name="Land M."/>
            <person name="Hauser L."/>
            <person name="Kyrpides N."/>
            <person name="Mikhailova N."/>
            <person name="Hersman L."/>
            <person name="Dubois J."/>
            <person name="Maurice P."/>
            <person name="Richardson P."/>
        </authorList>
    </citation>
    <scope>NUCLEOTIDE SEQUENCE [LARGE SCALE GENOMIC DNA]</scope>
    <source>
        <strain>ymp</strain>
    </source>
</reference>
<gene>
    <name evidence="1" type="primary">hfq</name>
    <name type="ordered locus">Pmen_0635</name>
</gene>
<feature type="chain" id="PRO_1000025927" description="RNA-binding protein Hfq">
    <location>
        <begin position="1"/>
        <end position="86"/>
    </location>
</feature>
<feature type="domain" description="Sm" evidence="2">
    <location>
        <begin position="9"/>
        <end position="68"/>
    </location>
</feature>
<feature type="region of interest" description="Disordered" evidence="3">
    <location>
        <begin position="66"/>
        <end position="86"/>
    </location>
</feature>
<protein>
    <recommendedName>
        <fullName evidence="1">RNA-binding protein Hfq</fullName>
    </recommendedName>
</protein>
<evidence type="ECO:0000255" key="1">
    <source>
        <dbReference type="HAMAP-Rule" id="MF_00436"/>
    </source>
</evidence>
<evidence type="ECO:0000255" key="2">
    <source>
        <dbReference type="PROSITE-ProRule" id="PRU01346"/>
    </source>
</evidence>
<evidence type="ECO:0000256" key="3">
    <source>
        <dbReference type="SAM" id="MobiDB-lite"/>
    </source>
</evidence>
<sequence length="86" mass="9480">MSKGHSLQDPYLNTLRKERVPVSIYLVNGIKLQGQIESFDQFVILLKNTVSQMVYKHAISTVVPSRPVRLPSAGDSEQADAEPGNA</sequence>